<proteinExistence type="inferred from homology"/>
<organism>
    <name type="scientific">Pyrobaculum aerophilum (strain ATCC 51768 / DSM 7523 / JCM 9630 / CIP 104966 / NBRC 100827 / IM2)</name>
    <dbReference type="NCBI Taxonomy" id="178306"/>
    <lineage>
        <taxon>Archaea</taxon>
        <taxon>Thermoproteota</taxon>
        <taxon>Thermoprotei</taxon>
        <taxon>Thermoproteales</taxon>
        <taxon>Thermoproteaceae</taxon>
        <taxon>Pyrobaculum</taxon>
    </lineage>
</organism>
<reference key="1">
    <citation type="journal article" date="2002" name="Proc. Natl. Acad. Sci. U.S.A.">
        <title>Genome sequence of the hyperthermophilic crenarchaeon Pyrobaculum aerophilum.</title>
        <authorList>
            <person name="Fitz-Gibbon S.T."/>
            <person name="Ladner H."/>
            <person name="Kim U.-J."/>
            <person name="Stetter K.O."/>
            <person name="Simon M.I."/>
            <person name="Miller J.H."/>
        </authorList>
    </citation>
    <scope>NUCLEOTIDE SEQUENCE [LARGE SCALE GENOMIC DNA]</scope>
    <source>
        <strain>ATCC 51768 / DSM 7523 / JCM 9630 / CIP 104966 / NBRC 100827 / IM2</strain>
    </source>
</reference>
<feature type="chain" id="PRO_0000156431" description="RNA 3'-terminal phosphate cyclase">
    <location>
        <begin position="1"/>
        <end position="348"/>
    </location>
</feature>
<feature type="active site" description="Tele-AMP-histidine intermediate" evidence="1">
    <location>
        <position position="312"/>
    </location>
</feature>
<feature type="binding site" evidence="1">
    <location>
        <position position="101"/>
    </location>
    <ligand>
        <name>ATP</name>
        <dbReference type="ChEBI" id="CHEBI:30616"/>
    </ligand>
</feature>
<feature type="binding site" evidence="1">
    <location>
        <begin position="286"/>
        <end position="289"/>
    </location>
    <ligand>
        <name>ATP</name>
        <dbReference type="ChEBI" id="CHEBI:30616"/>
    </ligand>
</feature>
<name>RTCA_PYRAE</name>
<gene>
    <name evidence="1" type="primary">rtcA</name>
    <name type="ordered locus">PAE3596</name>
</gene>
<sequence>MAVRIDGSYGEGGGQILRTSIALSALLGRPVEIVNIRAKRANPGLQPQHLTGVKVAALLTDAEVKGAEKGSTRLYFEPKTLKCGNFSIDIGTAGSISLIVQTLAPILLYAPCPTQITVTGGTDVAWAPPIDYMRFVFTKVLERFGAKLSIELIRRGHYPRGGGRAVVRAEPVKRLKAVESEEFGNVVKISGISHAVNLPPHVAERQAKAAREELSKMGLDADIAIEVRNDGLGPGSGVVIWAVSDAGNVIGGDSLGERGKPAETVGKEAAQKLIAVLKTRASVDPHMADMAVLYMALAEGRSRISTSEETMHLKTNMYIIEQFLRVKFSTMEKAGRYTIEVEGVGYNR</sequence>
<comment type="function">
    <text evidence="1">Catalyzes the conversion of 3'-phosphate to a 2',3'-cyclic phosphodiester at the end of RNA. The mechanism of action of the enzyme occurs in 3 steps: (A) adenylation of the enzyme by ATP; (B) transfer of adenylate to an RNA-N3'P to produce RNA-N3'PP5'A; (C) and attack of the adjacent 2'-hydroxyl on the 3'-phosphorus in the diester linkage to produce the cyclic end product. The biological role of this enzyme is unknown but it is likely to function in some aspects of cellular RNA processing.</text>
</comment>
<comment type="catalytic activity">
    <reaction evidence="1">
        <text>a 3'-end 3'-phospho-ribonucleotide-RNA + ATP = a 3'-end 2',3'-cyclophospho-ribonucleotide-RNA + AMP + diphosphate</text>
        <dbReference type="Rhea" id="RHEA:23976"/>
        <dbReference type="Rhea" id="RHEA-COMP:10463"/>
        <dbReference type="Rhea" id="RHEA-COMP:10464"/>
        <dbReference type="ChEBI" id="CHEBI:30616"/>
        <dbReference type="ChEBI" id="CHEBI:33019"/>
        <dbReference type="ChEBI" id="CHEBI:83062"/>
        <dbReference type="ChEBI" id="CHEBI:83064"/>
        <dbReference type="ChEBI" id="CHEBI:456215"/>
        <dbReference type="EC" id="6.5.1.4"/>
    </reaction>
</comment>
<comment type="subcellular location">
    <subcellularLocation>
        <location evidence="1">Cytoplasm</location>
    </subcellularLocation>
</comment>
<comment type="similarity">
    <text evidence="1">Belongs to the RNA 3'-terminal cyclase family. Type 1 subfamily.</text>
</comment>
<protein>
    <recommendedName>
        <fullName evidence="1">RNA 3'-terminal phosphate cyclase</fullName>
        <shortName evidence="1">RNA cyclase</shortName>
        <shortName evidence="1">RNA-3'-phosphate cyclase</shortName>
        <ecNumber evidence="1">6.5.1.4</ecNumber>
    </recommendedName>
</protein>
<keyword id="KW-0067">ATP-binding</keyword>
<keyword id="KW-0963">Cytoplasm</keyword>
<keyword id="KW-0436">Ligase</keyword>
<keyword id="KW-0547">Nucleotide-binding</keyword>
<keyword id="KW-1185">Reference proteome</keyword>
<accession>Q8ZST4</accession>
<evidence type="ECO:0000255" key="1">
    <source>
        <dbReference type="HAMAP-Rule" id="MF_00200"/>
    </source>
</evidence>
<dbReference type="EC" id="6.5.1.4" evidence="1"/>
<dbReference type="EMBL" id="AE009441">
    <property type="protein sequence ID" value="AAL65029.1"/>
    <property type="molecule type" value="Genomic_DNA"/>
</dbReference>
<dbReference type="RefSeq" id="WP_011009496.1">
    <property type="nucleotide sequence ID" value="NC_003364.1"/>
</dbReference>
<dbReference type="SMR" id="Q8ZST4"/>
<dbReference type="FunCoup" id="Q8ZST4">
    <property type="interactions" value="191"/>
</dbReference>
<dbReference type="STRING" id="178306.PAE3596"/>
<dbReference type="EnsemblBacteria" id="AAL65029">
    <property type="protein sequence ID" value="AAL65029"/>
    <property type="gene ID" value="PAE3596"/>
</dbReference>
<dbReference type="GeneID" id="1466163"/>
<dbReference type="KEGG" id="pai:PAE3596"/>
<dbReference type="PATRIC" id="fig|178306.9.peg.2709"/>
<dbReference type="eggNOG" id="arCOG04125">
    <property type="taxonomic scope" value="Archaea"/>
</dbReference>
<dbReference type="HOGENOM" id="CLU_027882_0_0_2"/>
<dbReference type="InParanoid" id="Q8ZST4"/>
<dbReference type="Proteomes" id="UP000002439">
    <property type="component" value="Chromosome"/>
</dbReference>
<dbReference type="GO" id="GO:0005737">
    <property type="term" value="C:cytoplasm"/>
    <property type="evidence" value="ECO:0007669"/>
    <property type="project" value="UniProtKB-SubCell"/>
</dbReference>
<dbReference type="GO" id="GO:0005524">
    <property type="term" value="F:ATP binding"/>
    <property type="evidence" value="ECO:0007669"/>
    <property type="project" value="UniProtKB-KW"/>
</dbReference>
<dbReference type="GO" id="GO:0003963">
    <property type="term" value="F:RNA-3'-phosphate cyclase activity"/>
    <property type="evidence" value="ECO:0000318"/>
    <property type="project" value="GO_Central"/>
</dbReference>
<dbReference type="GO" id="GO:0006396">
    <property type="term" value="P:RNA processing"/>
    <property type="evidence" value="ECO:0007669"/>
    <property type="project" value="InterPro"/>
</dbReference>
<dbReference type="CDD" id="cd00874">
    <property type="entry name" value="RNA_Cyclase_Class_II"/>
    <property type="match status" value="1"/>
</dbReference>
<dbReference type="FunFam" id="3.30.360.20:FF:000002">
    <property type="entry name" value="RNA terminal phosphate cyclase-like 1"/>
    <property type="match status" value="1"/>
</dbReference>
<dbReference type="Gene3D" id="3.65.10.20">
    <property type="entry name" value="RNA 3'-terminal phosphate cyclase domain"/>
    <property type="match status" value="1"/>
</dbReference>
<dbReference type="Gene3D" id="3.30.360.20">
    <property type="entry name" value="RNA 3'-terminal phosphate cyclase, insert domain"/>
    <property type="match status" value="1"/>
</dbReference>
<dbReference type="HAMAP" id="MF_00200">
    <property type="entry name" value="RTC"/>
    <property type="match status" value="1"/>
</dbReference>
<dbReference type="InterPro" id="IPR013791">
    <property type="entry name" value="RNA3'-term_phos_cycl_insert"/>
</dbReference>
<dbReference type="InterPro" id="IPR023797">
    <property type="entry name" value="RNA3'_phos_cyclase_dom"/>
</dbReference>
<dbReference type="InterPro" id="IPR037136">
    <property type="entry name" value="RNA3'_phos_cyclase_dom_sf"/>
</dbReference>
<dbReference type="InterPro" id="IPR000228">
    <property type="entry name" value="RNA3'_term_phos_cyc"/>
</dbReference>
<dbReference type="InterPro" id="IPR017770">
    <property type="entry name" value="RNA3'_term_phos_cyc_type_1"/>
</dbReference>
<dbReference type="InterPro" id="IPR013792">
    <property type="entry name" value="RNA3'P_cycl/enolpyr_Trfase_a/b"/>
</dbReference>
<dbReference type="InterPro" id="IPR036553">
    <property type="entry name" value="RPTC_insert"/>
</dbReference>
<dbReference type="NCBIfam" id="TIGR03399">
    <property type="entry name" value="RNA_3prim_cycl"/>
    <property type="match status" value="1"/>
</dbReference>
<dbReference type="PANTHER" id="PTHR11096">
    <property type="entry name" value="RNA 3' TERMINAL PHOSPHATE CYCLASE"/>
    <property type="match status" value="1"/>
</dbReference>
<dbReference type="PANTHER" id="PTHR11096:SF0">
    <property type="entry name" value="RNA 3'-TERMINAL PHOSPHATE CYCLASE"/>
    <property type="match status" value="1"/>
</dbReference>
<dbReference type="Pfam" id="PF01137">
    <property type="entry name" value="RTC"/>
    <property type="match status" value="1"/>
</dbReference>
<dbReference type="Pfam" id="PF05189">
    <property type="entry name" value="RTC_insert"/>
    <property type="match status" value="1"/>
</dbReference>
<dbReference type="PIRSF" id="PIRSF005378">
    <property type="entry name" value="RNA3'_term_phos_cycl_euk"/>
    <property type="match status" value="1"/>
</dbReference>
<dbReference type="SUPFAM" id="SSF55205">
    <property type="entry name" value="EPT/RTPC-like"/>
    <property type="match status" value="2"/>
</dbReference>
<dbReference type="SUPFAM" id="SSF52913">
    <property type="entry name" value="RNA 3'-terminal phosphate cyclase, RPTC, insert domain"/>
    <property type="match status" value="1"/>
</dbReference>